<proteinExistence type="inferred from homology"/>
<name>RR14_EUGGR</name>
<gene>
    <name evidence="1" type="primary">rps14</name>
</gene>
<reference key="1">
    <citation type="journal article" date="1989" name="Nucleic Acids Res.">
        <title>Nucleotide sequence of the Euglena gracilis chloroplast genes for isoleucine, phenylalanine and cysteine transfer RNAs and ribosomal protein S14.</title>
        <authorList>
            <person name="Nickoloff J.A."/>
            <person name="Christopher D.A."/>
            <person name="Drager R.G."/>
            <person name="Hallick R.B."/>
        </authorList>
    </citation>
    <scope>NUCLEOTIDE SEQUENCE [GENOMIC DNA]</scope>
    <source>
        <strain>Z / UTEX 753</strain>
    </source>
</reference>
<reference key="2">
    <citation type="journal article" date="1993" name="Nucleic Acids Res.">
        <title>Complete sequence of Euglena gracilis chloroplast DNA.</title>
        <authorList>
            <person name="Hallick R.B."/>
            <person name="Hong L."/>
            <person name="Drager R.G."/>
            <person name="Favreau M.R."/>
            <person name="Monfort A."/>
            <person name="Orsat B."/>
            <person name="Spielmann A."/>
            <person name="Stutz E."/>
        </authorList>
    </citation>
    <scope>NUCLEOTIDE SEQUENCE [LARGE SCALE GENOMIC DNA]</scope>
    <source>
        <strain>Z / UTEX 753</strain>
    </source>
</reference>
<evidence type="ECO:0000255" key="1">
    <source>
        <dbReference type="HAMAP-Rule" id="MF_00537"/>
    </source>
</evidence>
<evidence type="ECO:0000305" key="2"/>
<accession>P11538</accession>
<geneLocation type="chloroplast"/>
<feature type="chain" id="PRO_0000130972" description="Small ribosomal subunit protein uS14c">
    <location>
        <begin position="1"/>
        <end position="100"/>
    </location>
</feature>
<keyword id="KW-0150">Chloroplast</keyword>
<keyword id="KW-0934">Plastid</keyword>
<keyword id="KW-0687">Ribonucleoprotein</keyword>
<keyword id="KW-0689">Ribosomal protein</keyword>
<keyword id="KW-0694">RNA-binding</keyword>
<keyword id="KW-0699">rRNA-binding</keyword>
<dbReference type="EMBL" id="Z11874">
    <property type="protein sequence ID" value="CAA77927.1"/>
    <property type="molecule type" value="Genomic_DNA"/>
</dbReference>
<dbReference type="EMBL" id="X15240">
    <property type="protein sequence ID" value="CAA33318.1"/>
    <property type="molecule type" value="Genomic_DNA"/>
</dbReference>
<dbReference type="EMBL" id="X70810">
    <property type="protein sequence ID" value="CAA50110.1"/>
    <property type="molecule type" value="Genomic_DNA"/>
</dbReference>
<dbReference type="PIR" id="S04701">
    <property type="entry name" value="R3EG14"/>
</dbReference>
<dbReference type="RefSeq" id="NP_041923.1">
    <property type="nucleotide sequence ID" value="NC_001603.2"/>
</dbReference>
<dbReference type="SMR" id="P11538"/>
<dbReference type="GeneID" id="807532"/>
<dbReference type="GO" id="GO:0009507">
    <property type="term" value="C:chloroplast"/>
    <property type="evidence" value="ECO:0007669"/>
    <property type="project" value="UniProtKB-SubCell"/>
</dbReference>
<dbReference type="GO" id="GO:0015935">
    <property type="term" value="C:small ribosomal subunit"/>
    <property type="evidence" value="ECO:0007669"/>
    <property type="project" value="TreeGrafter"/>
</dbReference>
<dbReference type="GO" id="GO:0019843">
    <property type="term" value="F:rRNA binding"/>
    <property type="evidence" value="ECO:0007669"/>
    <property type="project" value="UniProtKB-UniRule"/>
</dbReference>
<dbReference type="GO" id="GO:0003735">
    <property type="term" value="F:structural constituent of ribosome"/>
    <property type="evidence" value="ECO:0007669"/>
    <property type="project" value="InterPro"/>
</dbReference>
<dbReference type="GO" id="GO:0006412">
    <property type="term" value="P:translation"/>
    <property type="evidence" value="ECO:0007669"/>
    <property type="project" value="UniProtKB-UniRule"/>
</dbReference>
<dbReference type="Gene3D" id="1.10.287.1480">
    <property type="match status" value="1"/>
</dbReference>
<dbReference type="HAMAP" id="MF_00537">
    <property type="entry name" value="Ribosomal_uS14_1"/>
    <property type="match status" value="1"/>
</dbReference>
<dbReference type="InterPro" id="IPR001209">
    <property type="entry name" value="Ribosomal_uS14"/>
</dbReference>
<dbReference type="InterPro" id="IPR023036">
    <property type="entry name" value="Ribosomal_uS14_bac/plastid"/>
</dbReference>
<dbReference type="InterPro" id="IPR018271">
    <property type="entry name" value="Ribosomal_uS14_CS"/>
</dbReference>
<dbReference type="NCBIfam" id="NF006477">
    <property type="entry name" value="PRK08881.1"/>
    <property type="match status" value="1"/>
</dbReference>
<dbReference type="PANTHER" id="PTHR19836">
    <property type="entry name" value="30S RIBOSOMAL PROTEIN S14"/>
    <property type="match status" value="1"/>
</dbReference>
<dbReference type="PANTHER" id="PTHR19836:SF19">
    <property type="entry name" value="SMALL RIBOSOMAL SUBUNIT PROTEIN US14M"/>
    <property type="match status" value="1"/>
</dbReference>
<dbReference type="Pfam" id="PF00253">
    <property type="entry name" value="Ribosomal_S14"/>
    <property type="match status" value="1"/>
</dbReference>
<dbReference type="SUPFAM" id="SSF57716">
    <property type="entry name" value="Glucocorticoid receptor-like (DNA-binding domain)"/>
    <property type="match status" value="1"/>
</dbReference>
<dbReference type="PROSITE" id="PS00527">
    <property type="entry name" value="RIBOSOMAL_S14"/>
    <property type="match status" value="1"/>
</dbReference>
<sequence>MSKKSLIARQRKRIILVLIHSHNRYVYRTNGKDEKSFEKKLRIYSFLQKLPRNSLRCRLRNRCYVTGRSRGYFRTFGLSRHILRDMAHYGLLPGVTKASW</sequence>
<organism>
    <name type="scientific">Euglena gracilis</name>
    <dbReference type="NCBI Taxonomy" id="3039"/>
    <lineage>
        <taxon>Eukaryota</taxon>
        <taxon>Discoba</taxon>
        <taxon>Euglenozoa</taxon>
        <taxon>Euglenida</taxon>
        <taxon>Spirocuta</taxon>
        <taxon>Euglenophyceae</taxon>
        <taxon>Euglenales</taxon>
        <taxon>Euglenaceae</taxon>
        <taxon>Euglena</taxon>
    </lineage>
</organism>
<protein>
    <recommendedName>
        <fullName evidence="1">Small ribosomal subunit protein uS14c</fullName>
    </recommendedName>
    <alternativeName>
        <fullName evidence="2">30S ribosomal protein S14, chloroplastic</fullName>
    </alternativeName>
</protein>
<comment type="function">
    <text evidence="1">Binds 16S rRNA, required for the assembly of 30S particles.</text>
</comment>
<comment type="subunit">
    <text evidence="1">Part of the 30S ribosomal subunit.</text>
</comment>
<comment type="subcellular location">
    <subcellularLocation>
        <location>Plastid</location>
        <location>Chloroplast</location>
    </subcellularLocation>
</comment>
<comment type="similarity">
    <text evidence="1">Belongs to the universal ribosomal protein uS14 family.</text>
</comment>